<dbReference type="EMBL" id="AM884177">
    <property type="protein sequence ID" value="CAP07021.1"/>
    <property type="status" value="ALT_INIT"/>
    <property type="molecule type" value="Genomic_DNA"/>
</dbReference>
<dbReference type="KEGG" id="ctl:CTLon_0624"/>
<dbReference type="HOGENOM" id="CLU_619231_0_0_0"/>
<dbReference type="Proteomes" id="UP001154401">
    <property type="component" value="Chromosome"/>
</dbReference>
<dbReference type="GO" id="GO:0009279">
    <property type="term" value="C:cell outer membrane"/>
    <property type="evidence" value="ECO:0007669"/>
    <property type="project" value="UniProtKB-SubCell"/>
</dbReference>
<dbReference type="GO" id="GO:0046930">
    <property type="term" value="C:pore complex"/>
    <property type="evidence" value="ECO:0007669"/>
    <property type="project" value="UniProtKB-KW"/>
</dbReference>
<dbReference type="GO" id="GO:0015288">
    <property type="term" value="F:porin activity"/>
    <property type="evidence" value="ECO:0007669"/>
    <property type="project" value="UniProtKB-KW"/>
</dbReference>
<dbReference type="GO" id="GO:0006865">
    <property type="term" value="P:amino acid transport"/>
    <property type="evidence" value="ECO:0007669"/>
    <property type="project" value="UniProtKB-KW"/>
</dbReference>
<dbReference type="GO" id="GO:0008643">
    <property type="term" value="P:carbohydrate transport"/>
    <property type="evidence" value="ECO:0007669"/>
    <property type="project" value="InterPro"/>
</dbReference>
<dbReference type="GO" id="GO:0006811">
    <property type="term" value="P:monoatomic ion transport"/>
    <property type="evidence" value="ECO:0007669"/>
    <property type="project" value="UniProtKB-KW"/>
</dbReference>
<dbReference type="Gene3D" id="2.40.160.180">
    <property type="entry name" value="Carbohydrate-selective porin OprB"/>
    <property type="match status" value="1"/>
</dbReference>
<dbReference type="InterPro" id="IPR007049">
    <property type="entry name" value="Carb-sel_porin_OprB"/>
</dbReference>
<dbReference type="InterPro" id="IPR038673">
    <property type="entry name" value="OprB_sf"/>
</dbReference>
<dbReference type="Pfam" id="PF04966">
    <property type="entry name" value="OprB"/>
    <property type="match status" value="1"/>
</dbReference>
<organism>
    <name type="scientific">Chlamydia trachomatis serovar L2b (strain UCH-1/proctitis)</name>
    <dbReference type="NCBI Taxonomy" id="471473"/>
    <lineage>
        <taxon>Bacteria</taxon>
        <taxon>Pseudomonadati</taxon>
        <taxon>Chlamydiota</taxon>
        <taxon>Chlamydiia</taxon>
        <taxon>Chlamydiales</taxon>
        <taxon>Chlamydiaceae</taxon>
        <taxon>Chlamydia/Chlamydophila group</taxon>
        <taxon>Chlamydia</taxon>
    </lineage>
</organism>
<keyword id="KW-0029">Amino-acid transport</keyword>
<keyword id="KW-0998">Cell outer membrane</keyword>
<keyword id="KW-0406">Ion transport</keyword>
<keyword id="KW-0472">Membrane</keyword>
<keyword id="KW-0626">Porin</keyword>
<keyword id="KW-0732">Signal</keyword>
<keyword id="KW-0812">Transmembrane</keyword>
<keyword id="KW-1134">Transmembrane beta strand</keyword>
<keyword id="KW-0813">Transport</keyword>
<keyword id="KW-0843">Virulence</keyword>
<comment type="function">
    <text evidence="1">Facilitates L-arginine uptake, as part of the AaxABC system. The arginine uptake by the bacterium in the macrophage may be a virulence factor against the host innate immune response (By similarity).</text>
</comment>
<comment type="subcellular location">
    <subcellularLocation>
        <location evidence="1">Cell outer membrane</location>
        <topology evidence="1">Multi-pass membrane protein</topology>
    </subcellularLocation>
</comment>
<comment type="similarity">
    <text evidence="3">Belongs to the OprB family.</text>
</comment>
<comment type="sequence caution" evidence="3">
    <conflict type="erroneous initiation">
        <sequence resource="EMBL-CDS" id="CAP07021"/>
    </conflict>
</comment>
<feature type="signal peptide" evidence="2">
    <location>
        <begin position="1"/>
        <end position="22"/>
    </location>
</feature>
<feature type="chain" id="PRO_0000363185" description="Porin AaxA">
    <location>
        <begin position="23"/>
        <end position="461"/>
    </location>
</feature>
<evidence type="ECO:0000250" key="1"/>
<evidence type="ECO:0000255" key="2"/>
<evidence type="ECO:0000305" key="3"/>
<reference key="1">
    <citation type="journal article" date="2008" name="Genome Res.">
        <title>Chlamydia trachomatis: genome sequence analysis of lymphogranuloma venereum isolates.</title>
        <authorList>
            <person name="Thomson N.R."/>
            <person name="Holden M.T.G."/>
            <person name="Carder C."/>
            <person name="Lennard N."/>
            <person name="Lockey S.J."/>
            <person name="Marsh P."/>
            <person name="Skipp P."/>
            <person name="O'Connor C.D."/>
            <person name="Goodhead I."/>
            <person name="Norbertzcak H."/>
            <person name="Harris B."/>
            <person name="Ormond D."/>
            <person name="Rance R."/>
            <person name="Quail M.A."/>
            <person name="Parkhill J."/>
            <person name="Stephens R.S."/>
            <person name="Clarke I.N."/>
        </authorList>
    </citation>
    <scope>NUCLEOTIDE SEQUENCE [LARGE SCALE GENOMIC DNA]</scope>
    <source>
        <strain>UCH-1/proctitis</strain>
    </source>
</reference>
<accession>B0BC06</accession>
<protein>
    <recommendedName>
        <fullName>Porin AaxA</fullName>
    </recommendedName>
    <alternativeName>
        <fullName>Outer membrane protein AaxA</fullName>
    </alternativeName>
</protein>
<sequence>MSFRSVLLTALLSLSFTTTMQAAHHHYHRYTDKLHRQNHKKDLISPKPTEQEACNTPSLSKELIPLSEQRGLLSPIYDFISERLCLHGVSVRNLKQALKNSAGTQIALDWSILPQWFNPRVSHAPKLSIRDFGYSAHQTVTEATPPCWQNCFNPSAAVTIYDSSYGKGVFQISYTLVHYWRENAATAGDAMMLAGSINDYPSRQNIFSQFTFSQNFPNERVSLTIGQYSLYAIDGTLYNNDQQLGFISYALSQNPTATYSSGSLGAYLQVAPTASTSLQIGFQDAYNISGSSIKWSNLTKNRYNFHGFASWAPRCCLGSGQYSVLLYVTRQVPEQMEQTMGWSVNASQYISSKLYVFGRYSGVTGHVFPINRTYSCGMVSANLFNRNPQDLFGIACAFNNVHLSASPNAKRKYETVIEGFATIGCGPYLSFAPDFQLYLYPALRPNKQSARVYSVRANLAI</sequence>
<proteinExistence type="inferred from homology"/>
<gene>
    <name type="primary">aaxA</name>
    <name type="ordered locus">CTLon_0624</name>
</gene>
<name>AAXA_CHLTB</name>